<name>ALKMO_XENTR</name>
<organism>
    <name type="scientific">Xenopus tropicalis</name>
    <name type="common">Western clawed frog</name>
    <name type="synonym">Silurana tropicalis</name>
    <dbReference type="NCBI Taxonomy" id="8364"/>
    <lineage>
        <taxon>Eukaryota</taxon>
        <taxon>Metazoa</taxon>
        <taxon>Chordata</taxon>
        <taxon>Craniata</taxon>
        <taxon>Vertebrata</taxon>
        <taxon>Euteleostomi</taxon>
        <taxon>Amphibia</taxon>
        <taxon>Batrachia</taxon>
        <taxon>Anura</taxon>
        <taxon>Pipoidea</taxon>
        <taxon>Pipidae</taxon>
        <taxon>Xenopodinae</taxon>
        <taxon>Xenopus</taxon>
        <taxon>Silurana</taxon>
    </lineage>
</organism>
<sequence>MGGFTGQSEVSVSQGIRMMFYVLYPNETSFKNVEDVPDYVEKATVYFFIMLILEMIISWAWKGQPLRINDGLTSLSAGVFSRLPDVAFRGVEVASYIYIWNNYRLIELPWDSPWTWWLTFLGVDFGYYWFHRMAHEVNIMWAGHQTHHSSEDYNLTTALRQSFIQKYFSWMFYWPMAFCIPPSVFAVHIQFNLLYQFWIHTELINNLGPLEWILNTPSHHRVHHGRNPYCIDSNYAGTLIIWDRMFGTFVPEKEKVLYGLTHPINTFEPFQVQIQHCVLIWNTFWATPGFSNKLSVIFKGPGWGPGKPRLGLPEEIPQITGEEKPYDPKSAGYLQCYGMMHFLLLLAVYVHMFEAKLILTPATLLLRIGYILLTLTSLGFIFDKRPKAALLETIRCLLFLFLQKYDYMTTDVPYLRIINEVTFSICTAAWGLKAVKEAIERTKKLE</sequence>
<dbReference type="EC" id="1.14.16.5"/>
<dbReference type="EMBL" id="BC088041">
    <property type="protein sequence ID" value="AAH88041.1"/>
    <property type="molecule type" value="mRNA"/>
</dbReference>
<dbReference type="RefSeq" id="NP_001011313.1">
    <property type="nucleotide sequence ID" value="NM_001011313.1"/>
</dbReference>
<dbReference type="FunCoup" id="Q5M8F9">
    <property type="interactions" value="231"/>
</dbReference>
<dbReference type="STRING" id="8364.ENSXETP00000047505"/>
<dbReference type="PaxDb" id="8364-ENSXETP00000011041"/>
<dbReference type="DNASU" id="496770"/>
<dbReference type="GeneID" id="496770"/>
<dbReference type="KEGG" id="xtr:496770"/>
<dbReference type="AGR" id="Xenbase:XB-GENE-950748"/>
<dbReference type="CTD" id="392636"/>
<dbReference type="Xenbase" id="XB-GENE-950748">
    <property type="gene designation" value="agmo"/>
</dbReference>
<dbReference type="eggNOG" id="KOG0872">
    <property type="taxonomic scope" value="Eukaryota"/>
</dbReference>
<dbReference type="InParanoid" id="Q5M8F9"/>
<dbReference type="OMA" id="FMPTGWR"/>
<dbReference type="OrthoDB" id="6354873at2759"/>
<dbReference type="Reactome" id="R-XTR-75109">
    <property type="pathway name" value="Triglyceride biosynthesis"/>
</dbReference>
<dbReference type="Proteomes" id="UP000008143">
    <property type="component" value="Chromosome 6"/>
</dbReference>
<dbReference type="GO" id="GO:0005783">
    <property type="term" value="C:endoplasmic reticulum"/>
    <property type="evidence" value="ECO:0000250"/>
    <property type="project" value="UniProtKB"/>
</dbReference>
<dbReference type="GO" id="GO:0005789">
    <property type="term" value="C:endoplasmic reticulum membrane"/>
    <property type="evidence" value="ECO:0007669"/>
    <property type="project" value="UniProtKB-SubCell"/>
</dbReference>
<dbReference type="GO" id="GO:0050479">
    <property type="term" value="F:glyceryl-ether monooxygenase activity"/>
    <property type="evidence" value="ECO:0000250"/>
    <property type="project" value="UniProtKB"/>
</dbReference>
<dbReference type="GO" id="GO:0005506">
    <property type="term" value="F:iron ion binding"/>
    <property type="evidence" value="ECO:0000250"/>
    <property type="project" value="UniProtKB"/>
</dbReference>
<dbReference type="GO" id="GO:0046485">
    <property type="term" value="P:ether lipid metabolic process"/>
    <property type="evidence" value="ECO:0000250"/>
    <property type="project" value="UniProtKB"/>
</dbReference>
<dbReference type="GO" id="GO:0008610">
    <property type="term" value="P:lipid biosynthetic process"/>
    <property type="evidence" value="ECO:0007669"/>
    <property type="project" value="InterPro"/>
</dbReference>
<dbReference type="GO" id="GO:0006643">
    <property type="term" value="P:membrane lipid metabolic process"/>
    <property type="evidence" value="ECO:0000250"/>
    <property type="project" value="UniProtKB"/>
</dbReference>
<dbReference type="InterPro" id="IPR056853">
    <property type="entry name" value="AGMP_C"/>
</dbReference>
<dbReference type="InterPro" id="IPR006694">
    <property type="entry name" value="Fatty_acid_hydroxylase"/>
</dbReference>
<dbReference type="InterPro" id="IPR051689">
    <property type="entry name" value="Sterol_desaturase/TMEM195"/>
</dbReference>
<dbReference type="PANTHER" id="PTHR21624:SF1">
    <property type="entry name" value="ALKYLGLYCEROL MONOOXYGENASE"/>
    <property type="match status" value="1"/>
</dbReference>
<dbReference type="PANTHER" id="PTHR21624">
    <property type="entry name" value="STEROL DESATURASE-RELATED PROTEIN"/>
    <property type="match status" value="1"/>
</dbReference>
<dbReference type="Pfam" id="PF24858">
    <property type="entry name" value="AGMP_C"/>
    <property type="match status" value="1"/>
</dbReference>
<dbReference type="Pfam" id="PF04116">
    <property type="entry name" value="FA_hydroxylase"/>
    <property type="match status" value="1"/>
</dbReference>
<proteinExistence type="evidence at transcript level"/>
<keyword id="KW-0256">Endoplasmic reticulum</keyword>
<keyword id="KW-0408">Iron</keyword>
<keyword id="KW-0443">Lipid metabolism</keyword>
<keyword id="KW-0472">Membrane</keyword>
<keyword id="KW-0560">Oxidoreductase</keyword>
<keyword id="KW-1185">Reference proteome</keyword>
<keyword id="KW-0812">Transmembrane</keyword>
<keyword id="KW-1133">Transmembrane helix</keyword>
<gene>
    <name type="primary">agmo</name>
    <name type="synonym">tmem195</name>
</gene>
<evidence type="ECO:0000250" key="1"/>
<evidence type="ECO:0000255" key="2"/>
<evidence type="ECO:0000305" key="3"/>
<protein>
    <recommendedName>
        <fullName>Alkylglycerol monooxygenase</fullName>
        <ecNumber>1.14.16.5</ecNumber>
    </recommendedName>
    <alternativeName>
        <fullName>Transmembrane protein 195</fullName>
    </alternativeName>
</protein>
<accession>Q5M8F9</accession>
<feature type="chain" id="PRO_0000299304" description="Alkylglycerol monooxygenase">
    <location>
        <begin position="1"/>
        <end position="446"/>
    </location>
</feature>
<feature type="transmembrane region" description="Helical" evidence="2">
    <location>
        <begin position="43"/>
        <end position="63"/>
    </location>
</feature>
<feature type="transmembrane region" description="Helical" evidence="2">
    <location>
        <begin position="110"/>
        <end position="130"/>
    </location>
</feature>
<feature type="transmembrane region" description="Helical" evidence="2">
    <location>
        <begin position="167"/>
        <end position="187"/>
    </location>
</feature>
<feature type="transmembrane region" description="Helical" evidence="2">
    <location>
        <begin position="339"/>
        <end position="359"/>
    </location>
</feature>
<feature type="transmembrane region" description="Helical" evidence="2">
    <location>
        <begin position="362"/>
        <end position="382"/>
    </location>
</feature>
<feature type="transmembrane region" description="Helical" evidence="2">
    <location>
        <begin position="412"/>
        <end position="434"/>
    </location>
</feature>
<feature type="domain" description="Fatty acid hydroxylase" evidence="2">
    <location>
        <begin position="118"/>
        <end position="248"/>
    </location>
</feature>
<feature type="short sequence motif" description="Histidine box-1">
    <location>
        <begin position="131"/>
        <end position="135"/>
    </location>
</feature>
<feature type="short sequence motif" description="Histidine box-2">
    <location>
        <begin position="144"/>
        <end position="148"/>
    </location>
</feature>
<feature type="short sequence motif" description="Histidine box-3">
    <location>
        <begin position="220"/>
        <end position="224"/>
    </location>
</feature>
<comment type="function">
    <text evidence="1">Glyceryl-ether monooxygenase that cleaves the O-alkyl bond of ether lipids. Ether lipids are essential components of brain membranes (By similarity).</text>
</comment>
<comment type="catalytic activity">
    <reaction>
        <text>1-O-(1,2-saturated-alkyl)-sn-glycerol + (6R)-L-erythro-5,6,7,8-tetrahydrobiopterin + O2 = a 1-(1-hydroxyalkyl)-sn-glycerol + (6R)-L-erythro-6,7-dihydrobiopterin + H2O</text>
        <dbReference type="Rhea" id="RHEA:36255"/>
        <dbReference type="ChEBI" id="CHEBI:15377"/>
        <dbReference type="ChEBI" id="CHEBI:15379"/>
        <dbReference type="ChEBI" id="CHEBI:43120"/>
        <dbReference type="ChEBI" id="CHEBI:59560"/>
        <dbReference type="ChEBI" id="CHEBI:73418"/>
        <dbReference type="ChEBI" id="CHEBI:83957"/>
        <dbReference type="EC" id="1.14.16.5"/>
    </reaction>
</comment>
<comment type="cofactor">
    <cofactor evidence="1">
        <name>Fe cation</name>
        <dbReference type="ChEBI" id="CHEBI:24875"/>
    </cofactor>
</comment>
<comment type="subcellular location">
    <subcellularLocation>
        <location evidence="1">Endoplasmic reticulum membrane</location>
        <topology evidence="1">Multi-pass membrane protein</topology>
    </subcellularLocation>
</comment>
<comment type="similarity">
    <text evidence="3">Belongs to the sterol desaturase family. TMEM195 subfamily.</text>
</comment>
<reference key="1">
    <citation type="submission" date="2004-12" db="EMBL/GenBank/DDBJ databases">
        <authorList>
            <consortium name="NIH - Xenopus Gene Collection (XGC) project"/>
        </authorList>
    </citation>
    <scope>NUCLEOTIDE SEQUENCE [LARGE SCALE MRNA]</scope>
</reference>